<dbReference type="EMBL" id="AL513382">
    <property type="protein sequence ID" value="CAD07604.1"/>
    <property type="molecule type" value="Genomic_DNA"/>
</dbReference>
<dbReference type="EMBL" id="AE014613">
    <property type="protein sequence ID" value="AAO68198.1"/>
    <property type="molecule type" value="Genomic_DNA"/>
</dbReference>
<dbReference type="RefSeq" id="NP_456914.1">
    <property type="nucleotide sequence ID" value="NC_003198.1"/>
</dbReference>
<dbReference type="RefSeq" id="WP_000127714.1">
    <property type="nucleotide sequence ID" value="NZ_WSUR01000029.1"/>
</dbReference>
<dbReference type="SMR" id="Q8Z4Z9"/>
<dbReference type="STRING" id="220341.gene:17586501"/>
<dbReference type="KEGG" id="stt:t0492"/>
<dbReference type="KEGG" id="sty:STY2603"/>
<dbReference type="PATRIC" id="fig|220341.7.peg.2636"/>
<dbReference type="eggNOG" id="COG2814">
    <property type="taxonomic scope" value="Bacteria"/>
</dbReference>
<dbReference type="HOGENOM" id="CLU_001265_10_3_6"/>
<dbReference type="OMA" id="VLFGWMP"/>
<dbReference type="OrthoDB" id="322544at2"/>
<dbReference type="Proteomes" id="UP000000541">
    <property type="component" value="Chromosome"/>
</dbReference>
<dbReference type="Proteomes" id="UP000002670">
    <property type="component" value="Chromosome"/>
</dbReference>
<dbReference type="GO" id="GO:0005886">
    <property type="term" value="C:plasma membrane"/>
    <property type="evidence" value="ECO:0007669"/>
    <property type="project" value="UniProtKB-SubCell"/>
</dbReference>
<dbReference type="GO" id="GO:0022857">
    <property type="term" value="F:transmembrane transporter activity"/>
    <property type="evidence" value="ECO:0007669"/>
    <property type="project" value="UniProtKB-UniRule"/>
</dbReference>
<dbReference type="CDD" id="cd17489">
    <property type="entry name" value="MFS_YfcJ_like"/>
    <property type="match status" value="1"/>
</dbReference>
<dbReference type="Gene3D" id="1.20.1250.20">
    <property type="entry name" value="MFS general substrate transporter like domains"/>
    <property type="match status" value="1"/>
</dbReference>
<dbReference type="HAMAP" id="MF_02091">
    <property type="entry name" value="MFS_YfcJ"/>
    <property type="match status" value="1"/>
</dbReference>
<dbReference type="InterPro" id="IPR011701">
    <property type="entry name" value="MFS"/>
</dbReference>
<dbReference type="InterPro" id="IPR020846">
    <property type="entry name" value="MFS_dom"/>
</dbReference>
<dbReference type="InterPro" id="IPR036259">
    <property type="entry name" value="MFS_trans_sf"/>
</dbReference>
<dbReference type="InterPro" id="IPR050171">
    <property type="entry name" value="MFS_Transporters"/>
</dbReference>
<dbReference type="InterPro" id="IPR037541">
    <property type="entry name" value="MFS_YfcJ"/>
</dbReference>
<dbReference type="NCBIfam" id="NF003477">
    <property type="entry name" value="PRK05122.1"/>
    <property type="match status" value="1"/>
</dbReference>
<dbReference type="NCBIfam" id="NF009048">
    <property type="entry name" value="PRK12382.1"/>
    <property type="match status" value="1"/>
</dbReference>
<dbReference type="PANTHER" id="PTHR23517:SF1">
    <property type="match status" value="1"/>
</dbReference>
<dbReference type="PANTHER" id="PTHR23517">
    <property type="entry name" value="RESISTANCE PROTEIN MDTM, PUTATIVE-RELATED-RELATED"/>
    <property type="match status" value="1"/>
</dbReference>
<dbReference type="Pfam" id="PF07690">
    <property type="entry name" value="MFS_1"/>
    <property type="match status" value="1"/>
</dbReference>
<dbReference type="SUPFAM" id="SSF103473">
    <property type="entry name" value="MFS general substrate transporter"/>
    <property type="match status" value="1"/>
</dbReference>
<dbReference type="PROSITE" id="PS50850">
    <property type="entry name" value="MFS"/>
    <property type="match status" value="1"/>
</dbReference>
<comment type="subcellular location">
    <subcellularLocation>
        <location evidence="1">Cell inner membrane</location>
        <topology evidence="1">Multi-pass membrane protein</topology>
    </subcellularLocation>
</comment>
<comment type="similarity">
    <text evidence="1">Belongs to the major facilitator superfamily. YfcJ family.</text>
</comment>
<name>YFCJ_SALTI</name>
<accession>Q8Z4Z9</accession>
<protein>
    <recommendedName>
        <fullName evidence="1">Uncharacterized MFS-type transporter YfcJ</fullName>
    </recommendedName>
</protein>
<evidence type="ECO:0000255" key="1">
    <source>
        <dbReference type="HAMAP-Rule" id="MF_02091"/>
    </source>
</evidence>
<keyword id="KW-0997">Cell inner membrane</keyword>
<keyword id="KW-1003">Cell membrane</keyword>
<keyword id="KW-0472">Membrane</keyword>
<keyword id="KW-0812">Transmembrane</keyword>
<keyword id="KW-1133">Transmembrane helix</keyword>
<keyword id="KW-0813">Transport</keyword>
<organism>
    <name type="scientific">Salmonella typhi</name>
    <dbReference type="NCBI Taxonomy" id="90370"/>
    <lineage>
        <taxon>Bacteria</taxon>
        <taxon>Pseudomonadati</taxon>
        <taxon>Pseudomonadota</taxon>
        <taxon>Gammaproteobacteria</taxon>
        <taxon>Enterobacterales</taxon>
        <taxon>Enterobacteriaceae</taxon>
        <taxon>Salmonella</taxon>
    </lineage>
</organism>
<feature type="chain" id="PRO_0000087803" description="Uncharacterized MFS-type transporter YfcJ">
    <location>
        <begin position="1"/>
        <end position="392"/>
    </location>
</feature>
<feature type="transmembrane region" description="Helical" evidence="1">
    <location>
        <begin position="22"/>
        <end position="42"/>
    </location>
</feature>
<feature type="transmembrane region" description="Helical" evidence="1">
    <location>
        <begin position="46"/>
        <end position="66"/>
    </location>
</feature>
<feature type="transmembrane region" description="Helical" evidence="1">
    <location>
        <begin position="97"/>
        <end position="117"/>
    </location>
</feature>
<feature type="transmembrane region" description="Helical" evidence="1">
    <location>
        <begin position="121"/>
        <end position="141"/>
    </location>
</feature>
<feature type="transmembrane region" description="Helical" evidence="1">
    <location>
        <begin position="151"/>
        <end position="171"/>
    </location>
</feature>
<feature type="transmembrane region" description="Helical" evidence="1">
    <location>
        <begin position="174"/>
        <end position="194"/>
    </location>
</feature>
<feature type="transmembrane region" description="Helical" evidence="1">
    <location>
        <begin position="224"/>
        <end position="244"/>
    </location>
</feature>
<feature type="transmembrane region" description="Helical" evidence="1">
    <location>
        <begin position="252"/>
        <end position="272"/>
    </location>
</feature>
<feature type="transmembrane region" description="Helical" evidence="1">
    <location>
        <begin position="276"/>
        <end position="298"/>
    </location>
</feature>
<feature type="transmembrane region" description="Helical" evidence="1">
    <location>
        <begin position="342"/>
        <end position="362"/>
    </location>
</feature>
<feature type="transmembrane region" description="Helical" evidence="1">
    <location>
        <begin position="369"/>
        <end position="389"/>
    </location>
</feature>
<reference key="1">
    <citation type="journal article" date="2001" name="Nature">
        <title>Complete genome sequence of a multiple drug resistant Salmonella enterica serovar Typhi CT18.</title>
        <authorList>
            <person name="Parkhill J."/>
            <person name="Dougan G."/>
            <person name="James K.D."/>
            <person name="Thomson N.R."/>
            <person name="Pickard D."/>
            <person name="Wain J."/>
            <person name="Churcher C.M."/>
            <person name="Mungall K.L."/>
            <person name="Bentley S.D."/>
            <person name="Holden M.T.G."/>
            <person name="Sebaihia M."/>
            <person name="Baker S."/>
            <person name="Basham D."/>
            <person name="Brooks K."/>
            <person name="Chillingworth T."/>
            <person name="Connerton P."/>
            <person name="Cronin A."/>
            <person name="Davis P."/>
            <person name="Davies R.M."/>
            <person name="Dowd L."/>
            <person name="White N."/>
            <person name="Farrar J."/>
            <person name="Feltwell T."/>
            <person name="Hamlin N."/>
            <person name="Haque A."/>
            <person name="Hien T.T."/>
            <person name="Holroyd S."/>
            <person name="Jagels K."/>
            <person name="Krogh A."/>
            <person name="Larsen T.S."/>
            <person name="Leather S."/>
            <person name="Moule S."/>
            <person name="O'Gaora P."/>
            <person name="Parry C."/>
            <person name="Quail M.A."/>
            <person name="Rutherford K.M."/>
            <person name="Simmonds M."/>
            <person name="Skelton J."/>
            <person name="Stevens K."/>
            <person name="Whitehead S."/>
            <person name="Barrell B.G."/>
        </authorList>
    </citation>
    <scope>NUCLEOTIDE SEQUENCE [LARGE SCALE GENOMIC DNA]</scope>
    <source>
        <strain>CT18</strain>
    </source>
</reference>
<reference key="2">
    <citation type="journal article" date="2003" name="J. Bacteriol.">
        <title>Comparative genomics of Salmonella enterica serovar Typhi strains Ty2 and CT18.</title>
        <authorList>
            <person name="Deng W."/>
            <person name="Liou S.-R."/>
            <person name="Plunkett G. III"/>
            <person name="Mayhew G.F."/>
            <person name="Rose D.J."/>
            <person name="Burland V."/>
            <person name="Kodoyianni V."/>
            <person name="Schwartz D.C."/>
            <person name="Blattner F.R."/>
        </authorList>
    </citation>
    <scope>NUCLEOTIDE SEQUENCE [LARGE SCALE GENOMIC DNA]</scope>
    <source>
        <strain>ATCC 700931 / Ty2</strain>
    </source>
</reference>
<proteinExistence type="inferred from homology"/>
<sequence>MTAVSQKTTTPSADFSLFRIAFAVFLTYMTVGLPLPVIPLFVHHELGYSNTMVGIAVGIQFFATVLTRGYAGRLADQYGAKRSALQGMLACGLAGAAWLLAALLPVSAPVKFALLIVGRLILGFGESQLLTGTLTWGLGLVGPTRSGKVMSWNGMAIYGALAAGAPLGLLIHSHFGFAALAGTTMVLPLLAWAFNGTVRKVPAYTGERPSLWSVVGLIWKPGLGLALQGVGFAVIGTFISLYFVSNGWTMAGFTLTAFGGAFVLMRILFGWMPDRFGGVKVAVVSLLVETAGLLLLWLAPTAWIALVGAALTGAGCSLIFSALGVEVVKRVPAQVRGTALGGYAAFQDISYGVTGPLAGMLATSYGYPSVFLAGAISAVVGILVTILSFRRG</sequence>
<gene>
    <name evidence="1" type="primary">yfcJ</name>
    <name type="ordered locus">STY2603</name>
    <name type="ordered locus">t0492</name>
</gene>